<name>HIS3_CLOBJ</name>
<dbReference type="EC" id="3.5.4.19" evidence="1"/>
<dbReference type="EMBL" id="CP001581">
    <property type="protein sequence ID" value="ACO86479.1"/>
    <property type="molecule type" value="Genomic_DNA"/>
</dbReference>
<dbReference type="RefSeq" id="WP_003385492.1">
    <property type="nucleotide sequence ID" value="NC_012563.1"/>
</dbReference>
<dbReference type="SMR" id="C1FN43"/>
<dbReference type="KEGG" id="cby:CLM_1814"/>
<dbReference type="eggNOG" id="COG0139">
    <property type="taxonomic scope" value="Bacteria"/>
</dbReference>
<dbReference type="HOGENOM" id="CLU_048577_5_3_9"/>
<dbReference type="UniPathway" id="UPA00031">
    <property type="reaction ID" value="UER00008"/>
</dbReference>
<dbReference type="Proteomes" id="UP000001374">
    <property type="component" value="Chromosome"/>
</dbReference>
<dbReference type="GO" id="GO:0005737">
    <property type="term" value="C:cytoplasm"/>
    <property type="evidence" value="ECO:0007669"/>
    <property type="project" value="UniProtKB-SubCell"/>
</dbReference>
<dbReference type="GO" id="GO:0000287">
    <property type="term" value="F:magnesium ion binding"/>
    <property type="evidence" value="ECO:0007669"/>
    <property type="project" value="UniProtKB-UniRule"/>
</dbReference>
<dbReference type="GO" id="GO:0004635">
    <property type="term" value="F:phosphoribosyl-AMP cyclohydrolase activity"/>
    <property type="evidence" value="ECO:0007669"/>
    <property type="project" value="UniProtKB-UniRule"/>
</dbReference>
<dbReference type="GO" id="GO:0008270">
    <property type="term" value="F:zinc ion binding"/>
    <property type="evidence" value="ECO:0007669"/>
    <property type="project" value="UniProtKB-UniRule"/>
</dbReference>
<dbReference type="GO" id="GO:0000105">
    <property type="term" value="P:L-histidine biosynthetic process"/>
    <property type="evidence" value="ECO:0007669"/>
    <property type="project" value="UniProtKB-UniRule"/>
</dbReference>
<dbReference type="FunFam" id="3.10.20.810:FF:000001">
    <property type="entry name" value="Histidine biosynthesis bifunctional protein HisIE"/>
    <property type="match status" value="1"/>
</dbReference>
<dbReference type="Gene3D" id="3.10.20.810">
    <property type="entry name" value="Phosphoribosyl-AMP cyclohydrolase"/>
    <property type="match status" value="1"/>
</dbReference>
<dbReference type="HAMAP" id="MF_01021">
    <property type="entry name" value="HisI"/>
    <property type="match status" value="1"/>
</dbReference>
<dbReference type="InterPro" id="IPR026660">
    <property type="entry name" value="PRA-CH"/>
</dbReference>
<dbReference type="InterPro" id="IPR002496">
    <property type="entry name" value="PRib_AMP_CycHydrolase_dom"/>
</dbReference>
<dbReference type="InterPro" id="IPR038019">
    <property type="entry name" value="PRib_AMP_CycHydrolase_sf"/>
</dbReference>
<dbReference type="NCBIfam" id="NF000768">
    <property type="entry name" value="PRK00051.1"/>
    <property type="match status" value="1"/>
</dbReference>
<dbReference type="PANTHER" id="PTHR42945">
    <property type="entry name" value="HISTIDINE BIOSYNTHESIS BIFUNCTIONAL PROTEIN"/>
    <property type="match status" value="1"/>
</dbReference>
<dbReference type="PANTHER" id="PTHR42945:SF1">
    <property type="entry name" value="HISTIDINE BIOSYNTHESIS BIFUNCTIONAL PROTEIN HIS7"/>
    <property type="match status" value="1"/>
</dbReference>
<dbReference type="Pfam" id="PF01502">
    <property type="entry name" value="PRA-CH"/>
    <property type="match status" value="1"/>
</dbReference>
<dbReference type="SUPFAM" id="SSF141734">
    <property type="entry name" value="HisI-like"/>
    <property type="match status" value="1"/>
</dbReference>
<proteinExistence type="inferred from homology"/>
<accession>C1FN43</accession>
<keyword id="KW-0028">Amino-acid biosynthesis</keyword>
<keyword id="KW-0963">Cytoplasm</keyword>
<keyword id="KW-0368">Histidine biosynthesis</keyword>
<keyword id="KW-0378">Hydrolase</keyword>
<keyword id="KW-0460">Magnesium</keyword>
<keyword id="KW-0479">Metal-binding</keyword>
<keyword id="KW-0862">Zinc</keyword>
<sequence>MNLQEILKEIDFKKGSDLIPTIIQDFYSGEVLMLAYMNKESLEKTIETNTTWFWSRSREELWNKGATSGHFQYVKSIHIDCDGDTLLIKVEQLGPACHTGHRSCFYTPLI</sequence>
<protein>
    <recommendedName>
        <fullName evidence="1">Phosphoribosyl-AMP cyclohydrolase</fullName>
        <shortName evidence="1">PRA-CH</shortName>
        <ecNumber evidence="1">3.5.4.19</ecNumber>
    </recommendedName>
</protein>
<feature type="chain" id="PRO_1000149068" description="Phosphoribosyl-AMP cyclohydrolase">
    <location>
        <begin position="1"/>
        <end position="110"/>
    </location>
</feature>
<feature type="binding site" evidence="1">
    <location>
        <position position="80"/>
    </location>
    <ligand>
        <name>Mg(2+)</name>
        <dbReference type="ChEBI" id="CHEBI:18420"/>
    </ligand>
</feature>
<feature type="binding site" evidence="1">
    <location>
        <position position="81"/>
    </location>
    <ligand>
        <name>Zn(2+)</name>
        <dbReference type="ChEBI" id="CHEBI:29105"/>
        <note>ligand shared between dimeric partners</note>
    </ligand>
</feature>
<feature type="binding site" evidence="1">
    <location>
        <position position="82"/>
    </location>
    <ligand>
        <name>Mg(2+)</name>
        <dbReference type="ChEBI" id="CHEBI:18420"/>
    </ligand>
</feature>
<feature type="binding site" evidence="1">
    <location>
        <position position="84"/>
    </location>
    <ligand>
        <name>Mg(2+)</name>
        <dbReference type="ChEBI" id="CHEBI:18420"/>
    </ligand>
</feature>
<feature type="binding site" evidence="1">
    <location>
        <position position="97"/>
    </location>
    <ligand>
        <name>Zn(2+)</name>
        <dbReference type="ChEBI" id="CHEBI:29105"/>
        <note>ligand shared between dimeric partners</note>
    </ligand>
</feature>
<feature type="binding site" evidence="1">
    <location>
        <position position="104"/>
    </location>
    <ligand>
        <name>Zn(2+)</name>
        <dbReference type="ChEBI" id="CHEBI:29105"/>
        <note>ligand shared between dimeric partners</note>
    </ligand>
</feature>
<reference key="1">
    <citation type="submission" date="2008-10" db="EMBL/GenBank/DDBJ databases">
        <title>Genome sequence of Clostridium botulinum A2 Kyoto.</title>
        <authorList>
            <person name="Shrivastava S."/>
            <person name="Brinkac L.M."/>
            <person name="Brown J.L."/>
            <person name="Bruce D."/>
            <person name="Detter C.C."/>
            <person name="Johnson E.A."/>
            <person name="Munk C.A."/>
            <person name="Smith L.A."/>
            <person name="Smith T.J."/>
            <person name="Sutton G."/>
            <person name="Brettin T.S."/>
        </authorList>
    </citation>
    <scope>NUCLEOTIDE SEQUENCE [LARGE SCALE GENOMIC DNA]</scope>
    <source>
        <strain>Kyoto / Type A2</strain>
    </source>
</reference>
<comment type="function">
    <text evidence="1">Catalyzes the hydrolysis of the adenine ring of phosphoribosyl-AMP.</text>
</comment>
<comment type="catalytic activity">
    <reaction evidence="1">
        <text>1-(5-phospho-beta-D-ribosyl)-5'-AMP + H2O = 1-(5-phospho-beta-D-ribosyl)-5-[(5-phospho-beta-D-ribosylamino)methylideneamino]imidazole-4-carboxamide</text>
        <dbReference type="Rhea" id="RHEA:20049"/>
        <dbReference type="ChEBI" id="CHEBI:15377"/>
        <dbReference type="ChEBI" id="CHEBI:58435"/>
        <dbReference type="ChEBI" id="CHEBI:59457"/>
        <dbReference type="EC" id="3.5.4.19"/>
    </reaction>
</comment>
<comment type="cofactor">
    <cofactor evidence="1">
        <name>Mg(2+)</name>
        <dbReference type="ChEBI" id="CHEBI:18420"/>
    </cofactor>
    <text evidence="1">Binds 1 Mg(2+) ion per subunit.</text>
</comment>
<comment type="cofactor">
    <cofactor evidence="1">
        <name>Zn(2+)</name>
        <dbReference type="ChEBI" id="CHEBI:29105"/>
    </cofactor>
    <text evidence="1">Binds 1 zinc ion per subunit.</text>
</comment>
<comment type="pathway">
    <text evidence="1">Amino-acid biosynthesis; L-histidine biosynthesis; L-histidine from 5-phospho-alpha-D-ribose 1-diphosphate: step 3/9.</text>
</comment>
<comment type="subunit">
    <text evidence="1">Homodimer.</text>
</comment>
<comment type="subcellular location">
    <subcellularLocation>
        <location evidence="1">Cytoplasm</location>
    </subcellularLocation>
</comment>
<comment type="similarity">
    <text evidence="1">Belongs to the PRA-CH family.</text>
</comment>
<gene>
    <name evidence="1" type="primary">hisI</name>
    <name type="ordered locus">CLM_1814</name>
</gene>
<evidence type="ECO:0000255" key="1">
    <source>
        <dbReference type="HAMAP-Rule" id="MF_01021"/>
    </source>
</evidence>
<organism>
    <name type="scientific">Clostridium botulinum (strain Kyoto / Type A2)</name>
    <dbReference type="NCBI Taxonomy" id="536232"/>
    <lineage>
        <taxon>Bacteria</taxon>
        <taxon>Bacillati</taxon>
        <taxon>Bacillota</taxon>
        <taxon>Clostridia</taxon>
        <taxon>Eubacteriales</taxon>
        <taxon>Clostridiaceae</taxon>
        <taxon>Clostridium</taxon>
    </lineage>
</organism>